<organism>
    <name type="scientific">Thermobifida fusca (strain YX)</name>
    <dbReference type="NCBI Taxonomy" id="269800"/>
    <lineage>
        <taxon>Bacteria</taxon>
        <taxon>Bacillati</taxon>
        <taxon>Actinomycetota</taxon>
        <taxon>Actinomycetes</taxon>
        <taxon>Streptosporangiales</taxon>
        <taxon>Nocardiopsidaceae</taxon>
        <taxon>Thermobifida</taxon>
    </lineage>
</organism>
<proteinExistence type="inferred from homology"/>
<sequence length="637" mass="68590">MTLLDSVHNPDDLKKLPDSQLPQLAAEIREFLISQVARTGGHLGPNLGVVELTIALHRVFDSPRDPILFDTGHQAYVHKILTGRKDFSKLRKEGGLSGYPSRAESEHDFIENSHASTALSYADGLARAYELQGITDRTVVALVGDGALTGGMAWEALNNIAEGKNRRIVIVVNDNGRSYSPTIGGLAEHFANLRMTRGYEQMLATAKNAINRAPVVGPPLYDALHAFKKGLKDAIQPQMMFEDLGLKYVGPIDGHDVAAVERALRRARDFGAPVIVHVLTQKGKGYAPAENHDEDQFHALGAFDVATGRPQSTPGLKWTSVFSDEMVRIGAEREDVVAITAAMLHPTGLAAFAEAYPDRVFDVGIAEQHAATCAAGLAMGGLHPVVAVYATFLNRCFDQVLMDVALHRQPVTFALDRAGITGDDGASHNGMWDLSILQVVPNLSIAVPRDAVRLRELLREAISIDDGPTVVRYPKGVVPPAIPAVDQIGGMDVLRRPASGTEAPDLLLVAVGPMAQTCCEVADRLADQGIGVTVVDPRWVKPLDPALVSEAARHSVVAVVEDNGRVGAVGDAVARALRDADLDIPVRTFGIEQRFLEHAKRDRILAQMGLDAQGLARKLTEIVAQRAEQSLEDEPAS</sequence>
<dbReference type="EC" id="2.2.1.7" evidence="1"/>
<dbReference type="EMBL" id="CP000088">
    <property type="protein sequence ID" value="AAZ55950.1"/>
    <property type="molecule type" value="Genomic_DNA"/>
</dbReference>
<dbReference type="RefSeq" id="WP_011292341.1">
    <property type="nucleotide sequence ID" value="NC_007333.1"/>
</dbReference>
<dbReference type="SMR" id="Q47NL9"/>
<dbReference type="STRING" id="269800.Tfu_1917"/>
<dbReference type="KEGG" id="tfu:Tfu_1917"/>
<dbReference type="eggNOG" id="COG1154">
    <property type="taxonomic scope" value="Bacteria"/>
</dbReference>
<dbReference type="HOGENOM" id="CLU_009227_1_4_11"/>
<dbReference type="OrthoDB" id="9803371at2"/>
<dbReference type="UniPathway" id="UPA00064">
    <property type="reaction ID" value="UER00091"/>
</dbReference>
<dbReference type="GO" id="GO:0005829">
    <property type="term" value="C:cytosol"/>
    <property type="evidence" value="ECO:0007669"/>
    <property type="project" value="TreeGrafter"/>
</dbReference>
<dbReference type="GO" id="GO:0008661">
    <property type="term" value="F:1-deoxy-D-xylulose-5-phosphate synthase activity"/>
    <property type="evidence" value="ECO:0007669"/>
    <property type="project" value="UniProtKB-UniRule"/>
</dbReference>
<dbReference type="GO" id="GO:0000287">
    <property type="term" value="F:magnesium ion binding"/>
    <property type="evidence" value="ECO:0007669"/>
    <property type="project" value="UniProtKB-UniRule"/>
</dbReference>
<dbReference type="GO" id="GO:0030976">
    <property type="term" value="F:thiamine pyrophosphate binding"/>
    <property type="evidence" value="ECO:0007669"/>
    <property type="project" value="UniProtKB-UniRule"/>
</dbReference>
<dbReference type="GO" id="GO:0052865">
    <property type="term" value="P:1-deoxy-D-xylulose 5-phosphate biosynthetic process"/>
    <property type="evidence" value="ECO:0007669"/>
    <property type="project" value="UniProtKB-UniPathway"/>
</dbReference>
<dbReference type="GO" id="GO:0019288">
    <property type="term" value="P:isopentenyl diphosphate biosynthetic process, methylerythritol 4-phosphate pathway"/>
    <property type="evidence" value="ECO:0007669"/>
    <property type="project" value="TreeGrafter"/>
</dbReference>
<dbReference type="GO" id="GO:0016114">
    <property type="term" value="P:terpenoid biosynthetic process"/>
    <property type="evidence" value="ECO:0007669"/>
    <property type="project" value="UniProtKB-UniRule"/>
</dbReference>
<dbReference type="GO" id="GO:0009228">
    <property type="term" value="P:thiamine biosynthetic process"/>
    <property type="evidence" value="ECO:0007669"/>
    <property type="project" value="UniProtKB-UniRule"/>
</dbReference>
<dbReference type="CDD" id="cd02007">
    <property type="entry name" value="TPP_DXS"/>
    <property type="match status" value="1"/>
</dbReference>
<dbReference type="CDD" id="cd07033">
    <property type="entry name" value="TPP_PYR_DXS_TK_like"/>
    <property type="match status" value="1"/>
</dbReference>
<dbReference type="FunFam" id="3.40.50.970:FF:000005">
    <property type="entry name" value="1-deoxy-D-xylulose-5-phosphate synthase"/>
    <property type="match status" value="1"/>
</dbReference>
<dbReference type="Gene3D" id="3.40.50.920">
    <property type="match status" value="1"/>
</dbReference>
<dbReference type="Gene3D" id="3.40.50.970">
    <property type="match status" value="2"/>
</dbReference>
<dbReference type="HAMAP" id="MF_00315">
    <property type="entry name" value="DXP_synth"/>
    <property type="match status" value="1"/>
</dbReference>
<dbReference type="InterPro" id="IPR005477">
    <property type="entry name" value="Dxylulose-5-P_synthase"/>
</dbReference>
<dbReference type="InterPro" id="IPR029061">
    <property type="entry name" value="THDP-binding"/>
</dbReference>
<dbReference type="InterPro" id="IPR009014">
    <property type="entry name" value="Transketo_C/PFOR_II"/>
</dbReference>
<dbReference type="InterPro" id="IPR005475">
    <property type="entry name" value="Transketolase-like_Pyr-bd"/>
</dbReference>
<dbReference type="InterPro" id="IPR020826">
    <property type="entry name" value="Transketolase_BS"/>
</dbReference>
<dbReference type="InterPro" id="IPR033248">
    <property type="entry name" value="Transketolase_C"/>
</dbReference>
<dbReference type="InterPro" id="IPR049557">
    <property type="entry name" value="Transketolase_CS"/>
</dbReference>
<dbReference type="NCBIfam" id="TIGR00204">
    <property type="entry name" value="dxs"/>
    <property type="match status" value="1"/>
</dbReference>
<dbReference type="NCBIfam" id="NF003933">
    <property type="entry name" value="PRK05444.2-2"/>
    <property type="match status" value="1"/>
</dbReference>
<dbReference type="PANTHER" id="PTHR43322">
    <property type="entry name" value="1-D-DEOXYXYLULOSE 5-PHOSPHATE SYNTHASE-RELATED"/>
    <property type="match status" value="1"/>
</dbReference>
<dbReference type="PANTHER" id="PTHR43322:SF5">
    <property type="entry name" value="1-DEOXY-D-XYLULOSE-5-PHOSPHATE SYNTHASE, CHLOROPLASTIC"/>
    <property type="match status" value="1"/>
</dbReference>
<dbReference type="Pfam" id="PF13292">
    <property type="entry name" value="DXP_synthase_N"/>
    <property type="match status" value="1"/>
</dbReference>
<dbReference type="Pfam" id="PF02779">
    <property type="entry name" value="Transket_pyr"/>
    <property type="match status" value="1"/>
</dbReference>
<dbReference type="Pfam" id="PF02780">
    <property type="entry name" value="Transketolase_C"/>
    <property type="match status" value="1"/>
</dbReference>
<dbReference type="SMART" id="SM00861">
    <property type="entry name" value="Transket_pyr"/>
    <property type="match status" value="1"/>
</dbReference>
<dbReference type="SUPFAM" id="SSF52518">
    <property type="entry name" value="Thiamin diphosphate-binding fold (THDP-binding)"/>
    <property type="match status" value="2"/>
</dbReference>
<dbReference type="SUPFAM" id="SSF52922">
    <property type="entry name" value="TK C-terminal domain-like"/>
    <property type="match status" value="1"/>
</dbReference>
<dbReference type="PROSITE" id="PS00801">
    <property type="entry name" value="TRANSKETOLASE_1"/>
    <property type="match status" value="1"/>
</dbReference>
<dbReference type="PROSITE" id="PS00802">
    <property type="entry name" value="TRANSKETOLASE_2"/>
    <property type="match status" value="1"/>
</dbReference>
<keyword id="KW-0414">Isoprene biosynthesis</keyword>
<keyword id="KW-0460">Magnesium</keyword>
<keyword id="KW-0479">Metal-binding</keyword>
<keyword id="KW-0784">Thiamine biosynthesis</keyword>
<keyword id="KW-0786">Thiamine pyrophosphate</keyword>
<keyword id="KW-0808">Transferase</keyword>
<feature type="chain" id="PRO_0000256496" description="1-deoxy-D-xylulose-5-phosphate synthase">
    <location>
        <begin position="1"/>
        <end position="637"/>
    </location>
</feature>
<feature type="binding site" evidence="1">
    <location>
        <position position="73"/>
    </location>
    <ligand>
        <name>thiamine diphosphate</name>
        <dbReference type="ChEBI" id="CHEBI:58937"/>
    </ligand>
</feature>
<feature type="binding site" evidence="1">
    <location>
        <begin position="113"/>
        <end position="115"/>
    </location>
    <ligand>
        <name>thiamine diphosphate</name>
        <dbReference type="ChEBI" id="CHEBI:58937"/>
    </ligand>
</feature>
<feature type="binding site" evidence="1">
    <location>
        <position position="145"/>
    </location>
    <ligand>
        <name>Mg(2+)</name>
        <dbReference type="ChEBI" id="CHEBI:18420"/>
    </ligand>
</feature>
<feature type="binding site" evidence="1">
    <location>
        <begin position="146"/>
        <end position="147"/>
    </location>
    <ligand>
        <name>thiamine diphosphate</name>
        <dbReference type="ChEBI" id="CHEBI:58937"/>
    </ligand>
</feature>
<feature type="binding site" evidence="1">
    <location>
        <position position="175"/>
    </location>
    <ligand>
        <name>Mg(2+)</name>
        <dbReference type="ChEBI" id="CHEBI:18420"/>
    </ligand>
</feature>
<feature type="binding site" evidence="1">
    <location>
        <position position="175"/>
    </location>
    <ligand>
        <name>thiamine diphosphate</name>
        <dbReference type="ChEBI" id="CHEBI:58937"/>
    </ligand>
</feature>
<feature type="binding site" evidence="1">
    <location>
        <position position="286"/>
    </location>
    <ligand>
        <name>thiamine diphosphate</name>
        <dbReference type="ChEBI" id="CHEBI:58937"/>
    </ligand>
</feature>
<feature type="binding site" evidence="1">
    <location>
        <position position="367"/>
    </location>
    <ligand>
        <name>thiamine diphosphate</name>
        <dbReference type="ChEBI" id="CHEBI:58937"/>
    </ligand>
</feature>
<evidence type="ECO:0000255" key="1">
    <source>
        <dbReference type="HAMAP-Rule" id="MF_00315"/>
    </source>
</evidence>
<gene>
    <name evidence="1" type="primary">dxs</name>
    <name type="ordered locus">Tfu_1917</name>
</gene>
<name>DXS_THEFY</name>
<comment type="function">
    <text evidence="1">Catalyzes the acyloin condensation reaction between C atoms 2 and 3 of pyruvate and glyceraldehyde 3-phosphate to yield 1-deoxy-D-xylulose-5-phosphate (DXP).</text>
</comment>
<comment type="catalytic activity">
    <reaction evidence="1">
        <text>D-glyceraldehyde 3-phosphate + pyruvate + H(+) = 1-deoxy-D-xylulose 5-phosphate + CO2</text>
        <dbReference type="Rhea" id="RHEA:12605"/>
        <dbReference type="ChEBI" id="CHEBI:15361"/>
        <dbReference type="ChEBI" id="CHEBI:15378"/>
        <dbReference type="ChEBI" id="CHEBI:16526"/>
        <dbReference type="ChEBI" id="CHEBI:57792"/>
        <dbReference type="ChEBI" id="CHEBI:59776"/>
        <dbReference type="EC" id="2.2.1.7"/>
    </reaction>
</comment>
<comment type="cofactor">
    <cofactor evidence="1">
        <name>Mg(2+)</name>
        <dbReference type="ChEBI" id="CHEBI:18420"/>
    </cofactor>
    <text evidence="1">Binds 1 Mg(2+) ion per subunit.</text>
</comment>
<comment type="cofactor">
    <cofactor evidence="1">
        <name>thiamine diphosphate</name>
        <dbReference type="ChEBI" id="CHEBI:58937"/>
    </cofactor>
    <text evidence="1">Binds 1 thiamine pyrophosphate per subunit.</text>
</comment>
<comment type="pathway">
    <text evidence="1">Metabolic intermediate biosynthesis; 1-deoxy-D-xylulose 5-phosphate biosynthesis; 1-deoxy-D-xylulose 5-phosphate from D-glyceraldehyde 3-phosphate and pyruvate: step 1/1.</text>
</comment>
<comment type="subunit">
    <text evidence="1">Homodimer.</text>
</comment>
<comment type="similarity">
    <text evidence="1">Belongs to the transketolase family. DXPS subfamily.</text>
</comment>
<protein>
    <recommendedName>
        <fullName evidence="1">1-deoxy-D-xylulose-5-phosphate synthase</fullName>
        <ecNumber evidence="1">2.2.1.7</ecNumber>
    </recommendedName>
    <alternativeName>
        <fullName evidence="1">1-deoxyxylulose-5-phosphate synthase</fullName>
        <shortName evidence="1">DXP synthase</shortName>
        <shortName evidence="1">DXPS</shortName>
    </alternativeName>
</protein>
<accession>Q47NL9</accession>
<reference key="1">
    <citation type="journal article" date="2007" name="J. Bacteriol.">
        <title>Genome sequence and analysis of the soil cellulolytic actinomycete Thermobifida fusca YX.</title>
        <authorList>
            <person name="Lykidis A."/>
            <person name="Mavromatis K."/>
            <person name="Ivanova N."/>
            <person name="Anderson I."/>
            <person name="Land M."/>
            <person name="DiBartolo G."/>
            <person name="Martinez M."/>
            <person name="Lapidus A."/>
            <person name="Lucas S."/>
            <person name="Copeland A."/>
            <person name="Richardson P."/>
            <person name="Wilson D.B."/>
            <person name="Kyrpides N."/>
        </authorList>
    </citation>
    <scope>NUCLEOTIDE SEQUENCE [LARGE SCALE GENOMIC DNA]</scope>
    <source>
        <strain>YX</strain>
    </source>
</reference>